<feature type="initiator methionine" description="Removed" evidence="8">
    <location>
        <position position="1"/>
    </location>
</feature>
<feature type="chain" id="PRO_0000071454" description="Serine/threonine-protein phosphatase 2A 56 kDa regulatory subunit epsilon isoform">
    <location>
        <begin position="2"/>
        <end position="467"/>
    </location>
</feature>
<feature type="region of interest" description="Disordered" evidence="2">
    <location>
        <begin position="1"/>
        <end position="40"/>
    </location>
</feature>
<feature type="compositionally biased region" description="Basic residues" evidence="2">
    <location>
        <begin position="20"/>
        <end position="29"/>
    </location>
</feature>
<feature type="compositionally biased region" description="Low complexity" evidence="2">
    <location>
        <begin position="30"/>
        <end position="40"/>
    </location>
</feature>
<feature type="modified residue" description="N-acetylserine" evidence="8">
    <location>
        <position position="2"/>
    </location>
</feature>
<feature type="modified residue" description="Phosphothreonine" evidence="9">
    <location>
        <position position="7"/>
    </location>
</feature>
<feature type="modified residue" description="Phosphoserine" evidence="7">
    <location>
        <position position="30"/>
    </location>
</feature>
<feature type="modified residue" description="Phosphoserine" evidence="7">
    <location>
        <position position="32"/>
    </location>
</feature>
<feature type="modified residue" description="Phosphoserine" evidence="7">
    <location>
        <position position="34"/>
    </location>
</feature>
<feature type="splice variant" id="VSP_055163" description="In isoform 3." evidence="4">
    <location>
        <begin position="1"/>
        <end position="76"/>
    </location>
</feature>
<feature type="splice variant" id="VSP_054588" description="In isoform 2." evidence="5">
    <original>KSDRQR</original>
    <variation>N</variation>
    <location>
        <begin position="430"/>
        <end position="435"/>
    </location>
</feature>
<feature type="sequence conflict" description="In Ref. 3; BAH14801." evidence="6" ref="3">
    <original>R</original>
    <variation>W</variation>
    <location>
        <position position="194"/>
    </location>
</feature>
<feature type="helix" evidence="10">
    <location>
        <begin position="51"/>
        <end position="53"/>
    </location>
</feature>
<feature type="strand" evidence="10">
    <location>
        <begin position="56"/>
        <end position="58"/>
    </location>
</feature>
<feature type="helix" evidence="10">
    <location>
        <begin position="59"/>
        <end position="69"/>
    </location>
</feature>
<feature type="strand" evidence="10">
    <location>
        <begin position="76"/>
        <end position="78"/>
    </location>
</feature>
<feature type="turn" evidence="10">
    <location>
        <begin position="79"/>
        <end position="82"/>
    </location>
</feature>
<feature type="helix" evidence="10">
    <location>
        <begin position="83"/>
        <end position="99"/>
    </location>
</feature>
<feature type="helix" evidence="10">
    <location>
        <begin position="111"/>
        <end position="123"/>
    </location>
</feature>
<feature type="turn" evidence="10">
    <location>
        <begin position="137"/>
        <end position="139"/>
    </location>
</feature>
<feature type="helix" evidence="10">
    <location>
        <begin position="148"/>
        <end position="162"/>
    </location>
</feature>
<feature type="helix" evidence="10">
    <location>
        <begin position="169"/>
        <end position="172"/>
    </location>
</feature>
<feature type="turn" evidence="10">
    <location>
        <begin position="173"/>
        <end position="175"/>
    </location>
</feature>
<feature type="helix" evidence="10">
    <location>
        <begin position="178"/>
        <end position="186"/>
    </location>
</feature>
<feature type="helix" evidence="10">
    <location>
        <begin position="187"/>
        <end position="189"/>
    </location>
</feature>
<feature type="helix" evidence="10">
    <location>
        <begin position="193"/>
        <end position="209"/>
    </location>
</feature>
<feature type="helix" evidence="10">
    <location>
        <begin position="211"/>
        <end position="213"/>
    </location>
</feature>
<feature type="helix" evidence="10">
    <location>
        <begin position="214"/>
        <end position="230"/>
    </location>
</feature>
<feature type="helix" evidence="10">
    <location>
        <begin position="238"/>
        <end position="250"/>
    </location>
</feature>
<feature type="helix" evidence="10">
    <location>
        <begin position="258"/>
        <end position="266"/>
    </location>
</feature>
<feature type="turn" evidence="10">
    <location>
        <begin position="267"/>
        <end position="269"/>
    </location>
</feature>
<feature type="helix" evidence="10">
    <location>
        <begin position="270"/>
        <end position="273"/>
    </location>
</feature>
<feature type="helix" evidence="10">
    <location>
        <begin position="275"/>
        <end position="279"/>
    </location>
</feature>
<feature type="helix" evidence="10">
    <location>
        <begin position="281"/>
        <end position="294"/>
    </location>
</feature>
<feature type="helix" evidence="10">
    <location>
        <begin position="296"/>
        <end position="298"/>
    </location>
</feature>
<feature type="helix" evidence="10">
    <location>
        <begin position="299"/>
        <end position="308"/>
    </location>
</feature>
<feature type="helix" evidence="10">
    <location>
        <begin position="315"/>
        <end position="330"/>
    </location>
</feature>
<feature type="helix" evidence="10">
    <location>
        <begin position="334"/>
        <end position="338"/>
    </location>
</feature>
<feature type="helix" evidence="10">
    <location>
        <begin position="341"/>
        <end position="352"/>
    </location>
</feature>
<feature type="helix" evidence="10">
    <location>
        <begin position="357"/>
        <end position="364"/>
    </location>
</feature>
<feature type="helix" evidence="10">
    <location>
        <begin position="365"/>
        <end position="368"/>
    </location>
</feature>
<feature type="helix" evidence="10">
    <location>
        <begin position="370"/>
        <end position="378"/>
    </location>
</feature>
<feature type="helix" evidence="10">
    <location>
        <begin position="380"/>
        <end position="397"/>
    </location>
</feature>
<feature type="helix" evidence="10">
    <location>
        <begin position="401"/>
        <end position="416"/>
    </location>
</feature>
<feature type="helix" evidence="10">
    <location>
        <begin position="419"/>
        <end position="427"/>
    </location>
</feature>
<feature type="helix" evidence="10">
    <location>
        <begin position="430"/>
        <end position="454"/>
    </location>
</feature>
<organism>
    <name type="scientific">Homo sapiens</name>
    <name type="common">Human</name>
    <dbReference type="NCBI Taxonomy" id="9606"/>
    <lineage>
        <taxon>Eukaryota</taxon>
        <taxon>Metazoa</taxon>
        <taxon>Chordata</taxon>
        <taxon>Craniata</taxon>
        <taxon>Vertebrata</taxon>
        <taxon>Euteleostomi</taxon>
        <taxon>Mammalia</taxon>
        <taxon>Eutheria</taxon>
        <taxon>Euarchontoglires</taxon>
        <taxon>Primates</taxon>
        <taxon>Haplorrhini</taxon>
        <taxon>Catarrhini</taxon>
        <taxon>Hominidae</taxon>
        <taxon>Homo</taxon>
    </lineage>
</organism>
<evidence type="ECO:0000250" key="1"/>
<evidence type="ECO:0000256" key="2">
    <source>
        <dbReference type="SAM" id="MobiDB-lite"/>
    </source>
</evidence>
<evidence type="ECO:0000269" key="3">
    <source>
    </source>
</evidence>
<evidence type="ECO:0000303" key="4">
    <source>
    </source>
</evidence>
<evidence type="ECO:0000303" key="5">
    <source>
    </source>
</evidence>
<evidence type="ECO:0000305" key="6"/>
<evidence type="ECO:0007744" key="7">
    <source>
    </source>
</evidence>
<evidence type="ECO:0007744" key="8">
    <source>
    </source>
</evidence>
<evidence type="ECO:0007744" key="9">
    <source>
    </source>
</evidence>
<evidence type="ECO:0007829" key="10">
    <source>
        <dbReference type="PDB" id="8UWB"/>
    </source>
</evidence>
<dbReference type="EMBL" id="Z69029">
    <property type="protein sequence ID" value="CAA93153.1"/>
    <property type="molecule type" value="mRNA"/>
</dbReference>
<dbReference type="EMBL" id="L76703">
    <property type="protein sequence ID" value="AAB69752.1"/>
    <property type="molecule type" value="mRNA"/>
</dbReference>
<dbReference type="EMBL" id="AK316430">
    <property type="protein sequence ID" value="BAH14801.1"/>
    <property type="molecule type" value="mRNA"/>
</dbReference>
<dbReference type="EMBL" id="AL118555">
    <property type="status" value="NOT_ANNOTATED_CDS"/>
    <property type="molecule type" value="Genomic_DNA"/>
</dbReference>
<dbReference type="EMBL" id="AL132992">
    <property type="status" value="NOT_ANNOTATED_CDS"/>
    <property type="molecule type" value="Genomic_DNA"/>
</dbReference>
<dbReference type="EMBL" id="AL136038">
    <property type="status" value="NOT_ANNOTATED_CDS"/>
    <property type="molecule type" value="Genomic_DNA"/>
</dbReference>
<dbReference type="EMBL" id="BC093766">
    <property type="protein sequence ID" value="AAH93766.1"/>
    <property type="molecule type" value="mRNA"/>
</dbReference>
<dbReference type="EMBL" id="BC101479">
    <property type="protein sequence ID" value="AAI01480.1"/>
    <property type="molecule type" value="mRNA"/>
</dbReference>
<dbReference type="EMBL" id="BC143231">
    <property type="protein sequence ID" value="AAI43232.1"/>
    <property type="molecule type" value="mRNA"/>
</dbReference>
<dbReference type="EMBL" id="BC143234">
    <property type="protein sequence ID" value="AAI43235.1"/>
    <property type="molecule type" value="mRNA"/>
</dbReference>
<dbReference type="CCDS" id="CCDS61467.1">
    <molecule id="Q16537-3"/>
</dbReference>
<dbReference type="CCDS" id="CCDS61468.1">
    <molecule id="Q16537-2"/>
</dbReference>
<dbReference type="CCDS" id="CCDS9758.1">
    <molecule id="Q16537-1"/>
</dbReference>
<dbReference type="RefSeq" id="NP_001269108.1">
    <molecule id="Q16537-1"/>
    <property type="nucleotide sequence ID" value="NM_001282179.3"/>
</dbReference>
<dbReference type="RefSeq" id="NP_001269109.1">
    <molecule id="Q16537-2"/>
    <property type="nucleotide sequence ID" value="NM_001282180.3"/>
</dbReference>
<dbReference type="RefSeq" id="NP_001269110.1">
    <molecule id="Q16537-3"/>
    <property type="nucleotide sequence ID" value="NM_001282181.3"/>
</dbReference>
<dbReference type="RefSeq" id="NP_001269111.1">
    <molecule id="Q16537-3"/>
    <property type="nucleotide sequence ID" value="NM_001282182.3"/>
</dbReference>
<dbReference type="RefSeq" id="NP_006237.1">
    <molecule id="Q16537-1"/>
    <property type="nucleotide sequence ID" value="NM_006246.5"/>
</dbReference>
<dbReference type="RefSeq" id="XP_024305415.1">
    <molecule id="Q16537-1"/>
    <property type="nucleotide sequence ID" value="XM_024449647.2"/>
</dbReference>
<dbReference type="RefSeq" id="XP_047287499.1">
    <molecule id="Q16537-2"/>
    <property type="nucleotide sequence ID" value="XM_047431543.1"/>
</dbReference>
<dbReference type="RefSeq" id="XP_047287500.1">
    <molecule id="Q16537-3"/>
    <property type="nucleotide sequence ID" value="XM_047431544.1"/>
</dbReference>
<dbReference type="RefSeq" id="XP_054232293.1">
    <molecule id="Q16537-1"/>
    <property type="nucleotide sequence ID" value="XM_054376318.1"/>
</dbReference>
<dbReference type="RefSeq" id="XP_054232294.1">
    <molecule id="Q16537-2"/>
    <property type="nucleotide sequence ID" value="XM_054376319.1"/>
</dbReference>
<dbReference type="PDB" id="8UWB">
    <property type="method" value="X-ray"/>
    <property type="resolution" value="3.15 A"/>
    <property type="chains" value="B/E=1-467"/>
</dbReference>
<dbReference type="PDBsum" id="8UWB"/>
<dbReference type="SMR" id="Q16537"/>
<dbReference type="BioGRID" id="111521">
    <property type="interactions" value="165"/>
</dbReference>
<dbReference type="ELM" id="Q16537"/>
<dbReference type="FunCoup" id="Q16537">
    <property type="interactions" value="4984"/>
</dbReference>
<dbReference type="IntAct" id="Q16537">
    <property type="interactions" value="86"/>
</dbReference>
<dbReference type="MINT" id="Q16537"/>
<dbReference type="STRING" id="9606.ENSP00000337641"/>
<dbReference type="iPTMnet" id="Q16537"/>
<dbReference type="MetOSite" id="Q16537"/>
<dbReference type="PhosphoSitePlus" id="Q16537"/>
<dbReference type="BioMuta" id="PPP2R5E"/>
<dbReference type="DMDM" id="7387498"/>
<dbReference type="jPOST" id="Q16537"/>
<dbReference type="MassIVE" id="Q16537"/>
<dbReference type="PaxDb" id="9606-ENSP00000337641"/>
<dbReference type="PeptideAtlas" id="Q16537"/>
<dbReference type="ProteomicsDB" id="60898"/>
<dbReference type="ProteomicsDB" id="7180"/>
<dbReference type="Pumba" id="Q16537"/>
<dbReference type="Antibodypedia" id="50">
    <property type="antibodies" value="151 antibodies from 33 providers"/>
</dbReference>
<dbReference type="DNASU" id="5529"/>
<dbReference type="Ensembl" id="ENST00000337537.8">
    <molecule id="Q16537-1"/>
    <property type="protein sequence ID" value="ENSP00000337641.3"/>
    <property type="gene ID" value="ENSG00000154001.14"/>
</dbReference>
<dbReference type="Ensembl" id="ENST00000422769.6">
    <molecule id="Q16537-3"/>
    <property type="protein sequence ID" value="ENSP00000404632.2"/>
    <property type="gene ID" value="ENSG00000154001.14"/>
</dbReference>
<dbReference type="Ensembl" id="ENST00000555899.1">
    <molecule id="Q16537-2"/>
    <property type="protein sequence ID" value="ENSP00000452396.1"/>
    <property type="gene ID" value="ENSG00000154001.14"/>
</dbReference>
<dbReference type="GeneID" id="5529"/>
<dbReference type="KEGG" id="hsa:5529"/>
<dbReference type="MANE-Select" id="ENST00000337537.8">
    <property type="protein sequence ID" value="ENSP00000337641.3"/>
    <property type="RefSeq nucleotide sequence ID" value="NM_006246.5"/>
    <property type="RefSeq protein sequence ID" value="NP_006237.1"/>
</dbReference>
<dbReference type="UCSC" id="uc001xgd.3">
    <molecule id="Q16537-1"/>
    <property type="organism name" value="human"/>
</dbReference>
<dbReference type="AGR" id="HGNC:9313"/>
<dbReference type="CTD" id="5529"/>
<dbReference type="DisGeNET" id="5529"/>
<dbReference type="GeneCards" id="PPP2R5E"/>
<dbReference type="HGNC" id="HGNC:9313">
    <property type="gene designation" value="PPP2R5E"/>
</dbReference>
<dbReference type="HPA" id="ENSG00000154001">
    <property type="expression patterns" value="Low tissue specificity"/>
</dbReference>
<dbReference type="MalaCards" id="PPP2R5E"/>
<dbReference type="MIM" id="601647">
    <property type="type" value="gene"/>
</dbReference>
<dbReference type="neXtProt" id="NX_Q16537"/>
<dbReference type="OpenTargets" id="ENSG00000154001"/>
<dbReference type="PharmGKB" id="PA33677"/>
<dbReference type="VEuPathDB" id="HostDB:ENSG00000154001"/>
<dbReference type="eggNOG" id="KOG2085">
    <property type="taxonomic scope" value="Eukaryota"/>
</dbReference>
<dbReference type="GeneTree" id="ENSGT01030000234620"/>
<dbReference type="HOGENOM" id="CLU_012437_4_0_1"/>
<dbReference type="InParanoid" id="Q16537"/>
<dbReference type="OMA" id="MVPLFCR"/>
<dbReference type="OrthoDB" id="10264446at2759"/>
<dbReference type="PAN-GO" id="Q16537">
    <property type="GO annotations" value="5 GO annotations based on evolutionary models"/>
</dbReference>
<dbReference type="PhylomeDB" id="Q16537"/>
<dbReference type="TreeFam" id="TF105556"/>
<dbReference type="PathwayCommons" id="Q16537"/>
<dbReference type="Reactome" id="R-HSA-141444">
    <property type="pathway name" value="Amplification of signal from unattached kinetochores via a MAD2 inhibitory signal"/>
</dbReference>
<dbReference type="Reactome" id="R-HSA-195253">
    <property type="pathway name" value="Degradation of beta-catenin by the destruction complex"/>
</dbReference>
<dbReference type="Reactome" id="R-HSA-196299">
    <property type="pathway name" value="Beta-catenin phosphorylation cascade"/>
</dbReference>
<dbReference type="Reactome" id="R-HSA-2467813">
    <property type="pathway name" value="Separation of Sister Chromatids"/>
</dbReference>
<dbReference type="Reactome" id="R-HSA-2500257">
    <property type="pathway name" value="Resolution of Sister Chromatid Cohesion"/>
</dbReference>
<dbReference type="Reactome" id="R-HSA-389356">
    <property type="pathway name" value="Co-stimulation by CD28"/>
</dbReference>
<dbReference type="Reactome" id="R-HSA-389513">
    <property type="pathway name" value="Co-inhibition by CTLA4"/>
</dbReference>
<dbReference type="Reactome" id="R-HSA-432142">
    <property type="pathway name" value="Platelet sensitization by LDL"/>
</dbReference>
<dbReference type="Reactome" id="R-HSA-4641262">
    <property type="pathway name" value="Disassembly of the destruction complex and recruitment of AXIN to the membrane"/>
</dbReference>
<dbReference type="Reactome" id="R-HSA-5339716">
    <property type="pathway name" value="Signaling by GSK3beta mutants"/>
</dbReference>
<dbReference type="Reactome" id="R-HSA-5358747">
    <property type="pathway name" value="CTNNB1 S33 mutants aren't phosphorylated"/>
</dbReference>
<dbReference type="Reactome" id="R-HSA-5358749">
    <property type="pathway name" value="CTNNB1 S37 mutants aren't phosphorylated"/>
</dbReference>
<dbReference type="Reactome" id="R-HSA-5358751">
    <property type="pathway name" value="CTNNB1 S45 mutants aren't phosphorylated"/>
</dbReference>
<dbReference type="Reactome" id="R-HSA-5358752">
    <property type="pathway name" value="CTNNB1 T41 mutants aren't phosphorylated"/>
</dbReference>
<dbReference type="Reactome" id="R-HSA-5467337">
    <property type="pathway name" value="APC truncation mutants have impaired AXIN binding"/>
</dbReference>
<dbReference type="Reactome" id="R-HSA-5467340">
    <property type="pathway name" value="AXIN missense mutants destabilize the destruction complex"/>
</dbReference>
<dbReference type="Reactome" id="R-HSA-5467348">
    <property type="pathway name" value="Truncations of AMER1 destabilize the destruction complex"/>
</dbReference>
<dbReference type="Reactome" id="R-HSA-5663220">
    <property type="pathway name" value="RHO GTPases Activate Formins"/>
</dbReference>
<dbReference type="Reactome" id="R-HSA-5673000">
    <property type="pathway name" value="RAF activation"/>
</dbReference>
<dbReference type="Reactome" id="R-HSA-5675221">
    <property type="pathway name" value="Negative regulation of MAPK pathway"/>
</dbReference>
<dbReference type="Reactome" id="R-HSA-6811558">
    <property type="pathway name" value="PI5P, PP2A and IER3 Regulate PI3K/AKT Signaling"/>
</dbReference>
<dbReference type="Reactome" id="R-HSA-68877">
    <property type="pathway name" value="Mitotic Prometaphase"/>
</dbReference>
<dbReference type="Reactome" id="R-HSA-9648025">
    <property type="pathway name" value="EML4 and NUDC in mitotic spindle formation"/>
</dbReference>
<dbReference type="SignaLink" id="Q16537"/>
<dbReference type="SIGNOR" id="Q16537"/>
<dbReference type="BioGRID-ORCS" id="5529">
    <property type="hits" value="34 hits in 1155 CRISPR screens"/>
</dbReference>
<dbReference type="ChiTaRS" id="PPP2R5E">
    <property type="organism name" value="human"/>
</dbReference>
<dbReference type="GeneWiki" id="PPP2R5E"/>
<dbReference type="GenomeRNAi" id="5529"/>
<dbReference type="Pharos" id="Q16537">
    <property type="development level" value="Tbio"/>
</dbReference>
<dbReference type="PRO" id="PR:Q16537"/>
<dbReference type="Proteomes" id="UP000005640">
    <property type="component" value="Chromosome 14"/>
</dbReference>
<dbReference type="RNAct" id="Q16537">
    <property type="molecule type" value="protein"/>
</dbReference>
<dbReference type="Bgee" id="ENSG00000154001">
    <property type="expression patterns" value="Expressed in pancreatic ductal cell and 206 other cell types or tissues"/>
</dbReference>
<dbReference type="GO" id="GO:0005737">
    <property type="term" value="C:cytoplasm"/>
    <property type="evidence" value="ECO:0000304"/>
    <property type="project" value="ProtInc"/>
</dbReference>
<dbReference type="GO" id="GO:0005829">
    <property type="term" value="C:cytosol"/>
    <property type="evidence" value="ECO:0000314"/>
    <property type="project" value="HPA"/>
</dbReference>
<dbReference type="GO" id="GO:0005634">
    <property type="term" value="C:nucleus"/>
    <property type="evidence" value="ECO:0000318"/>
    <property type="project" value="GO_Central"/>
</dbReference>
<dbReference type="GO" id="GO:0000159">
    <property type="term" value="C:protein phosphatase type 2A complex"/>
    <property type="evidence" value="ECO:0000318"/>
    <property type="project" value="GO_Central"/>
</dbReference>
<dbReference type="GO" id="GO:0072542">
    <property type="term" value="F:protein phosphatase activator activity"/>
    <property type="evidence" value="ECO:0000318"/>
    <property type="project" value="GO_Central"/>
</dbReference>
<dbReference type="GO" id="GO:0019888">
    <property type="term" value="F:protein phosphatase regulator activity"/>
    <property type="evidence" value="ECO:0000304"/>
    <property type="project" value="ProtInc"/>
</dbReference>
<dbReference type="GO" id="GO:0007165">
    <property type="term" value="P:signal transduction"/>
    <property type="evidence" value="ECO:0007669"/>
    <property type="project" value="InterPro"/>
</dbReference>
<dbReference type="FunFam" id="1.25.10.10:FF:000010">
    <property type="entry name" value="Serine/threonine-protein phosphatase 2A 56 kDa regulatory subunit"/>
    <property type="match status" value="1"/>
</dbReference>
<dbReference type="Gene3D" id="1.25.10.10">
    <property type="entry name" value="Leucine-rich Repeat Variant"/>
    <property type="match status" value="1"/>
</dbReference>
<dbReference type="InterPro" id="IPR011989">
    <property type="entry name" value="ARM-like"/>
</dbReference>
<dbReference type="InterPro" id="IPR016024">
    <property type="entry name" value="ARM-type_fold"/>
</dbReference>
<dbReference type="InterPro" id="IPR002554">
    <property type="entry name" value="PP2A_B56"/>
</dbReference>
<dbReference type="PANTHER" id="PTHR10257">
    <property type="entry name" value="SERINE/THREONINE PROTEIN PHOSPHATASE 2A PP2A REGULATORY SUBUNIT B"/>
    <property type="match status" value="1"/>
</dbReference>
<dbReference type="PANTHER" id="PTHR10257:SF92">
    <property type="entry name" value="SERINE_THREONINE-PROTEIN PHOSPHATASE 2A 56 KDA REGULATORY SUBUNIT EPSILON ISOFORM"/>
    <property type="match status" value="1"/>
</dbReference>
<dbReference type="Pfam" id="PF01603">
    <property type="entry name" value="B56"/>
    <property type="match status" value="1"/>
</dbReference>
<dbReference type="PIRSF" id="PIRSF028043">
    <property type="entry name" value="PP2A_B56"/>
    <property type="match status" value="1"/>
</dbReference>
<dbReference type="SUPFAM" id="SSF48371">
    <property type="entry name" value="ARM repeat"/>
    <property type="match status" value="1"/>
</dbReference>
<protein>
    <recommendedName>
        <fullName>Serine/threonine-protein phosphatase 2A 56 kDa regulatory subunit epsilon isoform</fullName>
    </recommendedName>
    <alternativeName>
        <fullName>PP2A B subunit isoform B'-epsilon</fullName>
    </alternativeName>
    <alternativeName>
        <fullName>PP2A B subunit isoform B56-epsilon</fullName>
    </alternativeName>
    <alternativeName>
        <fullName>PP2A B subunit isoform PR61-epsilon</fullName>
    </alternativeName>
    <alternativeName>
        <fullName>PP2A B subunit isoform R5-epsilon</fullName>
    </alternativeName>
</protein>
<sequence length="467" mass="54699">MSSAPTTPPSVDKVDGFSRKSVRKARQKRSQSSSQFRSQGKPIELTPLPLLKDVPSSEQPELFLKKLQQCCVIFDFMDTLSDLKMKEYKRSTLNELVDYITISRGCLTEQTYPEVVRMVSCNIFRTLPPSDSNEFDPEEDEPTLEASWPHLQLVYEFFIRFLESQEFQPSIAKKYIDQKFVLQLLELFDSEDPRERDYLKTVLHRIYGKFLGLRAFIRKQINNIFLRFVYETEHFNGVAELLEILGSIINGFALPLKAEHKQFLVKVLIPLHTVRSLSLFHAQLAYCIVQFLEKDPSLTEPVIRGLMKFWPKTCSQKEVMFLGELEEILDVIEPSQFVKIQEPLFKQIAKCVSSPHFQVAERALYYWNNEYIMSLIEENSNVILPIMFSSLYRISKEHWNPAIVALVYNVLKAFMEMNSTMFDELTATYKSDRQREKKKEKEREELWKKLEDLELKRGLRRDGIIPT</sequence>
<proteinExistence type="evidence at protein level"/>
<name>2A5E_HUMAN</name>
<comment type="function">
    <text>The B regulatory subunit might modulate substrate selectivity and catalytic activity, and might also direct the localization of the catalytic enzyme to a particular subcellular compartment.</text>
</comment>
<comment type="subunit">
    <text evidence="1 3">Found in a complex with at least ARL2, PPP2CB; PPP2R1A, PPP2R2A, PPP2R5E and TBCD (By similarity). PP2A consists of a common heterodimeric core enzyme, composed of a 36 kDa catalytic subunit (subunit C) and a 65 kDa constant regulatory subunit (PR65 or subunit A), that associates with a variety of regulatory subunits. Proteins that associate with the core dimer include three families of regulatory subunits B (the R2/B/PR55/B55, R3/B''/PR72/PR130/PR59 and R5/B'/B56 families), the 48 kDa variable regulatory subunit, viral proteins, and cell signaling molecules. Interacts with SGO1.</text>
</comment>
<comment type="interaction">
    <interactant intactId="EBI-968374">
        <id>Q16537</id>
    </interactant>
    <interactant intactId="EBI-1180783">
        <id>O96017</id>
        <label>CHEK2</label>
    </interactant>
    <organismsDiffer>false</organismsDiffer>
    <experiments>3</experiments>
</comment>
<comment type="interaction">
    <interactant intactId="EBI-968374">
        <id>Q16537</id>
    </interactant>
    <interactant intactId="EBI-998108">
        <id>Q86YF9</id>
        <label>DZIP1</label>
    </interactant>
    <organismsDiffer>false</organismsDiffer>
    <experiments>3</experiments>
</comment>
<comment type="interaction">
    <interactant intactId="EBI-968374">
        <id>Q16537</id>
    </interactant>
    <interactant intactId="EBI-466029">
        <id>P42858</id>
        <label>HTT</label>
    </interactant>
    <organismsDiffer>false</organismsDiffer>
    <experiments>15</experiments>
</comment>
<comment type="interaction">
    <interactant intactId="EBI-968374">
        <id>Q16537</id>
    </interactant>
    <interactant intactId="EBI-7445625">
        <id>Q9HC29</id>
        <label>NOD2</label>
    </interactant>
    <organismsDiffer>false</organismsDiffer>
    <experiments>2</experiments>
</comment>
<comment type="interaction">
    <interactant intactId="EBI-968374">
        <id>Q16537</id>
    </interactant>
    <interactant intactId="EBI-302388">
        <id>P30153</id>
        <label>PPP2R1A</label>
    </interactant>
    <organismsDiffer>false</organismsDiffer>
    <experiments>9</experiments>
</comment>
<comment type="interaction">
    <interactant intactId="EBI-968374">
        <id>Q16537</id>
    </interactant>
    <interactant intactId="EBI-357094">
        <id>P30154</id>
        <label>PPP2R1B</label>
    </interactant>
    <organismsDiffer>false</organismsDiffer>
    <experiments>3</experiments>
</comment>
<comment type="interaction">
    <interactant intactId="EBI-968374">
        <id>Q16537</id>
    </interactant>
    <interactant intactId="EBI-717233">
        <id>Q9H0H5</id>
        <label>RACGAP1</label>
    </interactant>
    <organismsDiffer>false</organismsDiffer>
    <experiments>5</experiments>
</comment>
<comment type="interaction">
    <interactant intactId="EBI-968374">
        <id>Q16537</id>
    </interactant>
    <interactant intactId="EBI-524753">
        <id>Q8IUH5</id>
        <label>ZDHHC17</label>
    </interactant>
    <organismsDiffer>false</organismsDiffer>
    <experiments>2</experiments>
</comment>
<comment type="subcellular location">
    <subcellularLocation>
        <location>Cytoplasm</location>
    </subcellularLocation>
</comment>
<comment type="alternative products">
    <event type="alternative splicing"/>
    <isoform>
        <id>Q16537-1</id>
        <name>1</name>
        <sequence type="displayed"/>
    </isoform>
    <isoform>
        <id>Q16537-2</id>
        <name>2</name>
        <sequence type="described" ref="VSP_054588"/>
    </isoform>
    <isoform>
        <id>Q16537-3</id>
        <name>3</name>
        <sequence type="described" ref="VSP_055163"/>
    </isoform>
</comment>
<comment type="PTM">
    <text>Phosphorylated on serine residues.</text>
</comment>
<comment type="similarity">
    <text evidence="6">Belongs to the phosphatase 2A regulatory subunit B56 family.</text>
</comment>
<reference key="1">
    <citation type="journal article" date="1996" name="Biochem. J.">
        <title>The variable subunit associated with protein phosphatase 2A0 defines a novel multimember family of regulatory subunits.</title>
        <authorList>
            <person name="Zolnierowicz S."/>
            <person name="van Hoof C."/>
            <person name="Andjelkovic N."/>
            <person name="Cron P."/>
            <person name="Stevens I."/>
            <person name="Merlevede W."/>
            <person name="Goris J."/>
            <person name="Hemmings B.A."/>
        </authorList>
    </citation>
    <scope>NUCLEOTIDE SEQUENCE [MRNA] (ISOFORM 1)</scope>
    <scope>PROTEIN SEQUENCE OF 449-455</scope>
    <source>
        <tissue>Fetal retina</tissue>
    </source>
</reference>
<reference key="2">
    <citation type="journal article" date="1996" name="J. Biol. Chem.">
        <title>The B56 family of protein phosphatase 2A (PP2A) regulatory subunits encodes differentiation-induced phosphoproteins that target PP2A to both nucleus and cytoplasm.</title>
        <authorList>
            <person name="McCright B."/>
            <person name="Rivers A.M."/>
            <person name="Audlin S."/>
            <person name="Virshup D.M."/>
        </authorList>
    </citation>
    <scope>NUCLEOTIDE SEQUENCE [MRNA] (ISOFORM 1)</scope>
    <source>
        <tissue>Fetal brain</tissue>
    </source>
</reference>
<reference key="3">
    <citation type="journal article" date="2004" name="Nat. Genet.">
        <title>Complete sequencing and characterization of 21,243 full-length human cDNAs.</title>
        <authorList>
            <person name="Ota T."/>
            <person name="Suzuki Y."/>
            <person name="Nishikawa T."/>
            <person name="Otsuki T."/>
            <person name="Sugiyama T."/>
            <person name="Irie R."/>
            <person name="Wakamatsu A."/>
            <person name="Hayashi K."/>
            <person name="Sato H."/>
            <person name="Nagai K."/>
            <person name="Kimura K."/>
            <person name="Makita H."/>
            <person name="Sekine M."/>
            <person name="Obayashi M."/>
            <person name="Nishi T."/>
            <person name="Shibahara T."/>
            <person name="Tanaka T."/>
            <person name="Ishii S."/>
            <person name="Yamamoto J."/>
            <person name="Saito K."/>
            <person name="Kawai Y."/>
            <person name="Isono Y."/>
            <person name="Nakamura Y."/>
            <person name="Nagahari K."/>
            <person name="Murakami K."/>
            <person name="Yasuda T."/>
            <person name="Iwayanagi T."/>
            <person name="Wagatsuma M."/>
            <person name="Shiratori A."/>
            <person name="Sudo H."/>
            <person name="Hosoiri T."/>
            <person name="Kaku Y."/>
            <person name="Kodaira H."/>
            <person name="Kondo H."/>
            <person name="Sugawara M."/>
            <person name="Takahashi M."/>
            <person name="Kanda K."/>
            <person name="Yokoi T."/>
            <person name="Furuya T."/>
            <person name="Kikkawa E."/>
            <person name="Omura Y."/>
            <person name="Abe K."/>
            <person name="Kamihara K."/>
            <person name="Katsuta N."/>
            <person name="Sato K."/>
            <person name="Tanikawa M."/>
            <person name="Yamazaki M."/>
            <person name="Ninomiya K."/>
            <person name="Ishibashi T."/>
            <person name="Yamashita H."/>
            <person name="Murakawa K."/>
            <person name="Fujimori K."/>
            <person name="Tanai H."/>
            <person name="Kimata M."/>
            <person name="Watanabe M."/>
            <person name="Hiraoka S."/>
            <person name="Chiba Y."/>
            <person name="Ishida S."/>
            <person name="Ono Y."/>
            <person name="Takiguchi S."/>
            <person name="Watanabe S."/>
            <person name="Yosida M."/>
            <person name="Hotuta T."/>
            <person name="Kusano J."/>
            <person name="Kanehori K."/>
            <person name="Takahashi-Fujii A."/>
            <person name="Hara H."/>
            <person name="Tanase T.-O."/>
            <person name="Nomura Y."/>
            <person name="Togiya S."/>
            <person name="Komai F."/>
            <person name="Hara R."/>
            <person name="Takeuchi K."/>
            <person name="Arita M."/>
            <person name="Imose N."/>
            <person name="Musashino K."/>
            <person name="Yuuki H."/>
            <person name="Oshima A."/>
            <person name="Sasaki N."/>
            <person name="Aotsuka S."/>
            <person name="Yoshikawa Y."/>
            <person name="Matsunawa H."/>
            <person name="Ichihara T."/>
            <person name="Shiohata N."/>
            <person name="Sano S."/>
            <person name="Moriya S."/>
            <person name="Momiyama H."/>
            <person name="Satoh N."/>
            <person name="Takami S."/>
            <person name="Terashima Y."/>
            <person name="Suzuki O."/>
            <person name="Nakagawa S."/>
            <person name="Senoh A."/>
            <person name="Mizoguchi H."/>
            <person name="Goto Y."/>
            <person name="Shimizu F."/>
            <person name="Wakebe H."/>
            <person name="Hishigaki H."/>
            <person name="Watanabe T."/>
            <person name="Sugiyama A."/>
            <person name="Takemoto M."/>
            <person name="Kawakami B."/>
            <person name="Yamazaki M."/>
            <person name="Watanabe K."/>
            <person name="Kumagai A."/>
            <person name="Itakura S."/>
            <person name="Fukuzumi Y."/>
            <person name="Fujimori Y."/>
            <person name="Komiyama M."/>
            <person name="Tashiro H."/>
            <person name="Tanigami A."/>
            <person name="Fujiwara T."/>
            <person name="Ono T."/>
            <person name="Yamada K."/>
            <person name="Fujii Y."/>
            <person name="Ozaki K."/>
            <person name="Hirao M."/>
            <person name="Ohmori Y."/>
            <person name="Kawabata A."/>
            <person name="Hikiji T."/>
            <person name="Kobatake N."/>
            <person name="Inagaki H."/>
            <person name="Ikema Y."/>
            <person name="Okamoto S."/>
            <person name="Okitani R."/>
            <person name="Kawakami T."/>
            <person name="Noguchi S."/>
            <person name="Itoh T."/>
            <person name="Shigeta K."/>
            <person name="Senba T."/>
            <person name="Matsumura K."/>
            <person name="Nakajima Y."/>
            <person name="Mizuno T."/>
            <person name="Morinaga M."/>
            <person name="Sasaki M."/>
            <person name="Togashi T."/>
            <person name="Oyama M."/>
            <person name="Hata H."/>
            <person name="Watanabe M."/>
            <person name="Komatsu T."/>
            <person name="Mizushima-Sugano J."/>
            <person name="Satoh T."/>
            <person name="Shirai Y."/>
            <person name="Takahashi Y."/>
            <person name="Nakagawa K."/>
            <person name="Okumura K."/>
            <person name="Nagase T."/>
            <person name="Nomura N."/>
            <person name="Kikuchi H."/>
            <person name="Masuho Y."/>
            <person name="Yamashita R."/>
            <person name="Nakai K."/>
            <person name="Yada T."/>
            <person name="Nakamura Y."/>
            <person name="Ohara O."/>
            <person name="Isogai T."/>
            <person name="Sugano S."/>
        </authorList>
    </citation>
    <scope>NUCLEOTIDE SEQUENCE [LARGE SCALE MRNA] (ISOFORM 3)</scope>
    <source>
        <tissue>Testis</tissue>
    </source>
</reference>
<reference key="4">
    <citation type="journal article" date="2003" name="Nature">
        <title>The DNA sequence and analysis of human chromosome 14.</title>
        <authorList>
            <person name="Heilig R."/>
            <person name="Eckenberg R."/>
            <person name="Petit J.-L."/>
            <person name="Fonknechten N."/>
            <person name="Da Silva C."/>
            <person name="Cattolico L."/>
            <person name="Levy M."/>
            <person name="Barbe V."/>
            <person name="De Berardinis V."/>
            <person name="Ureta-Vidal A."/>
            <person name="Pelletier E."/>
            <person name="Vico V."/>
            <person name="Anthouard V."/>
            <person name="Rowen L."/>
            <person name="Madan A."/>
            <person name="Qin S."/>
            <person name="Sun H."/>
            <person name="Du H."/>
            <person name="Pepin K."/>
            <person name="Artiguenave F."/>
            <person name="Robert C."/>
            <person name="Cruaud C."/>
            <person name="Bruels T."/>
            <person name="Jaillon O."/>
            <person name="Friedlander L."/>
            <person name="Samson G."/>
            <person name="Brottier P."/>
            <person name="Cure S."/>
            <person name="Segurens B."/>
            <person name="Aniere F."/>
            <person name="Samain S."/>
            <person name="Crespeau H."/>
            <person name="Abbasi N."/>
            <person name="Aiach N."/>
            <person name="Boscus D."/>
            <person name="Dickhoff R."/>
            <person name="Dors M."/>
            <person name="Dubois I."/>
            <person name="Friedman C."/>
            <person name="Gouyvenoux M."/>
            <person name="James R."/>
            <person name="Madan A."/>
            <person name="Mairey-Estrada B."/>
            <person name="Mangenot S."/>
            <person name="Martins N."/>
            <person name="Menard M."/>
            <person name="Oztas S."/>
            <person name="Ratcliffe A."/>
            <person name="Shaffer T."/>
            <person name="Trask B."/>
            <person name="Vacherie B."/>
            <person name="Bellemere C."/>
            <person name="Belser C."/>
            <person name="Besnard-Gonnet M."/>
            <person name="Bartol-Mavel D."/>
            <person name="Boutard M."/>
            <person name="Briez-Silla S."/>
            <person name="Combette S."/>
            <person name="Dufosse-Laurent V."/>
            <person name="Ferron C."/>
            <person name="Lechaplais C."/>
            <person name="Louesse C."/>
            <person name="Muselet D."/>
            <person name="Magdelenat G."/>
            <person name="Pateau E."/>
            <person name="Petit E."/>
            <person name="Sirvain-Trukniewicz P."/>
            <person name="Trybou A."/>
            <person name="Vega-Czarny N."/>
            <person name="Bataille E."/>
            <person name="Bluet E."/>
            <person name="Bordelais I."/>
            <person name="Dubois M."/>
            <person name="Dumont C."/>
            <person name="Guerin T."/>
            <person name="Haffray S."/>
            <person name="Hammadi R."/>
            <person name="Muanga J."/>
            <person name="Pellouin V."/>
            <person name="Robert D."/>
            <person name="Wunderle E."/>
            <person name="Gauguet G."/>
            <person name="Roy A."/>
            <person name="Sainte-Marthe L."/>
            <person name="Verdier J."/>
            <person name="Verdier-Discala C."/>
            <person name="Hillier L.W."/>
            <person name="Fulton L."/>
            <person name="McPherson J."/>
            <person name="Matsuda F."/>
            <person name="Wilson R."/>
            <person name="Scarpelli C."/>
            <person name="Gyapay G."/>
            <person name="Wincker P."/>
            <person name="Saurin W."/>
            <person name="Quetier F."/>
            <person name="Waterston R."/>
            <person name="Hood L."/>
            <person name="Weissenbach J."/>
        </authorList>
    </citation>
    <scope>NUCLEOTIDE SEQUENCE [LARGE SCALE GENOMIC DNA]</scope>
</reference>
<reference key="5">
    <citation type="journal article" date="2004" name="Genome Res.">
        <title>The status, quality, and expansion of the NIH full-length cDNA project: the Mammalian Gene Collection (MGC).</title>
        <authorList>
            <consortium name="The MGC Project Team"/>
        </authorList>
    </citation>
    <scope>NUCLEOTIDE SEQUENCE [LARGE SCALE MRNA] (ISOFORMS 1 AND 2)</scope>
    <source>
        <tissue>Brain</tissue>
    </source>
</reference>
<reference key="6">
    <citation type="journal article" date="2006" name="Nature">
        <title>Shugoshin collaborates with protein phosphatase 2A to protect cohesin.</title>
        <authorList>
            <person name="Kitajima T.S."/>
            <person name="Sakuno T."/>
            <person name="Ishiguro K."/>
            <person name="Iemura S."/>
            <person name="Natsume T."/>
            <person name="Kawashima S.A."/>
            <person name="Watanabe Y."/>
        </authorList>
    </citation>
    <scope>INTERACTION WITH SGO1</scope>
</reference>
<reference key="7">
    <citation type="journal article" date="2008" name="Mol. Cell">
        <title>Kinase-selective enrichment enables quantitative phosphoproteomics of the kinome across the cell cycle.</title>
        <authorList>
            <person name="Daub H."/>
            <person name="Olsen J.V."/>
            <person name="Bairlein M."/>
            <person name="Gnad F."/>
            <person name="Oppermann F.S."/>
            <person name="Korner R."/>
            <person name="Greff Z."/>
            <person name="Keri G."/>
            <person name="Stemmann O."/>
            <person name="Mann M."/>
        </authorList>
    </citation>
    <scope>IDENTIFICATION BY MASS SPECTROMETRY [LARGE SCALE ANALYSIS]</scope>
    <source>
        <tissue>Cervix carcinoma</tissue>
    </source>
</reference>
<reference key="8">
    <citation type="journal article" date="2009" name="Sci. Signal.">
        <title>Quantitative phosphoproteomic analysis of T cell receptor signaling reveals system-wide modulation of protein-protein interactions.</title>
        <authorList>
            <person name="Mayya V."/>
            <person name="Lundgren D.H."/>
            <person name="Hwang S.-I."/>
            <person name="Rezaul K."/>
            <person name="Wu L."/>
            <person name="Eng J.K."/>
            <person name="Rodionov V."/>
            <person name="Han D.K."/>
        </authorList>
    </citation>
    <scope>IDENTIFICATION BY MASS SPECTROMETRY [LARGE SCALE ANALYSIS]</scope>
    <source>
        <tissue>Leukemic T-cell</tissue>
    </source>
</reference>
<reference key="9">
    <citation type="journal article" date="2011" name="BMC Syst. Biol.">
        <title>Initial characterization of the human central proteome.</title>
        <authorList>
            <person name="Burkard T.R."/>
            <person name="Planyavsky M."/>
            <person name="Kaupe I."/>
            <person name="Breitwieser F.P."/>
            <person name="Buerckstuemmer T."/>
            <person name="Bennett K.L."/>
            <person name="Superti-Furga G."/>
            <person name="Colinge J."/>
        </authorList>
    </citation>
    <scope>IDENTIFICATION BY MASS SPECTROMETRY [LARGE SCALE ANALYSIS]</scope>
</reference>
<reference key="10">
    <citation type="journal article" date="2011" name="Sci. Signal.">
        <title>System-wide temporal characterization of the proteome and phosphoproteome of human embryonic stem cell differentiation.</title>
        <authorList>
            <person name="Rigbolt K.T."/>
            <person name="Prokhorova T.A."/>
            <person name="Akimov V."/>
            <person name="Henningsen J."/>
            <person name="Johansen P.T."/>
            <person name="Kratchmarova I."/>
            <person name="Kassem M."/>
            <person name="Mann M."/>
            <person name="Olsen J.V."/>
            <person name="Blagoev B."/>
        </authorList>
    </citation>
    <scope>PHOSPHORYLATION [LARGE SCALE ANALYSIS] AT SER-30; SER-32 AND SER-34</scope>
    <scope>IDENTIFICATION BY MASS SPECTROMETRY [LARGE SCALE ANALYSIS]</scope>
</reference>
<reference key="11">
    <citation type="journal article" date="2012" name="Proc. Natl. Acad. Sci. U.S.A.">
        <title>N-terminal acetylome analyses and functional insights of the N-terminal acetyltransferase NatB.</title>
        <authorList>
            <person name="Van Damme P."/>
            <person name="Lasa M."/>
            <person name="Polevoda B."/>
            <person name="Gazquez C."/>
            <person name="Elosegui-Artola A."/>
            <person name="Kim D.S."/>
            <person name="De Juan-Pardo E."/>
            <person name="Demeyer K."/>
            <person name="Hole K."/>
            <person name="Larrea E."/>
            <person name="Timmerman E."/>
            <person name="Prieto J."/>
            <person name="Arnesen T."/>
            <person name="Sherman F."/>
            <person name="Gevaert K."/>
            <person name="Aldabe R."/>
        </authorList>
    </citation>
    <scope>ACETYLATION [LARGE SCALE ANALYSIS] AT SER-2</scope>
    <scope>CLEAVAGE OF INITIATOR METHIONINE [LARGE SCALE ANALYSIS]</scope>
    <scope>IDENTIFICATION BY MASS SPECTROMETRY [LARGE SCALE ANALYSIS]</scope>
</reference>
<reference key="12">
    <citation type="journal article" date="2013" name="J. Proteome Res.">
        <title>Toward a comprehensive characterization of a human cancer cell phosphoproteome.</title>
        <authorList>
            <person name="Zhou H."/>
            <person name="Di Palma S."/>
            <person name="Preisinger C."/>
            <person name="Peng M."/>
            <person name="Polat A.N."/>
            <person name="Heck A.J."/>
            <person name="Mohammed S."/>
        </authorList>
    </citation>
    <scope>PHOSPHORYLATION [LARGE SCALE ANALYSIS] AT THR-7</scope>
    <scope>IDENTIFICATION BY MASS SPECTROMETRY [LARGE SCALE ANALYSIS]</scope>
    <source>
        <tissue>Cervix carcinoma</tissue>
        <tissue>Erythroleukemia</tissue>
    </source>
</reference>
<accession>Q16537</accession>
<accession>A4FU37</accession>
<accession>B7ZAW5</accession>
<accession>B7ZKK8</accession>
<accession>B7ZKK9</accession>
<accession>J3KQN6</accession>
<accession>Q52LW4</accession>
<keyword id="KW-0002">3D-structure</keyword>
<keyword id="KW-0007">Acetylation</keyword>
<keyword id="KW-0025">Alternative splicing</keyword>
<keyword id="KW-0963">Cytoplasm</keyword>
<keyword id="KW-0903">Direct protein sequencing</keyword>
<keyword id="KW-0597">Phosphoprotein</keyword>
<keyword id="KW-1267">Proteomics identification</keyword>
<keyword id="KW-1185">Reference proteome</keyword>
<gene>
    <name type="primary">PPP2R5E</name>
</gene>